<reference key="1">
    <citation type="journal article" date="1998" name="DNA Res.">
        <title>Complete sequence and gene organization of the genome of a hyper-thermophilic archaebacterium, Pyrococcus horikoshii OT3.</title>
        <authorList>
            <person name="Kawarabayasi Y."/>
            <person name="Sawada M."/>
            <person name="Horikawa H."/>
            <person name="Haikawa Y."/>
            <person name="Hino Y."/>
            <person name="Yamamoto S."/>
            <person name="Sekine M."/>
            <person name="Baba S."/>
            <person name="Kosugi H."/>
            <person name="Hosoyama A."/>
            <person name="Nagai Y."/>
            <person name="Sakai M."/>
            <person name="Ogura K."/>
            <person name="Otsuka R."/>
            <person name="Nakazawa H."/>
            <person name="Takamiya M."/>
            <person name="Ohfuku Y."/>
            <person name="Funahashi T."/>
            <person name="Tanaka T."/>
            <person name="Kudoh Y."/>
            <person name="Yamazaki J."/>
            <person name="Kushida N."/>
            <person name="Oguchi A."/>
            <person name="Aoki K."/>
            <person name="Yoshizawa T."/>
            <person name="Nakamura Y."/>
            <person name="Robb F.T."/>
            <person name="Horikoshi K."/>
            <person name="Masuchi Y."/>
            <person name="Shizuya H."/>
            <person name="Kikuchi H."/>
        </authorList>
    </citation>
    <scope>NUCLEOTIDE SEQUENCE [LARGE SCALE GENOMIC DNA]</scope>
    <source>
        <strain>ATCC 700860 / DSM 12428 / JCM 9974 / NBRC 100139 / OT-3</strain>
    </source>
</reference>
<evidence type="ECO:0000250" key="1"/>
<evidence type="ECO:0000255" key="2"/>
<evidence type="ECO:0000305" key="3"/>
<proteinExistence type="inferred from homology"/>
<accession>P62005</accession>
<accession>O74015</accession>
<keyword id="KW-0479">Metal-binding</keyword>
<keyword id="KW-0687">Ribonucleoprotein</keyword>
<keyword id="KW-0689">Ribosomal protein</keyword>
<keyword id="KW-0694">RNA-binding</keyword>
<keyword id="KW-0699">rRNA-binding</keyword>
<keyword id="KW-0862">Zinc</keyword>
<keyword id="KW-0863">Zinc-finger</keyword>
<comment type="function">
    <text evidence="1">Binds to the 23S rRNA.</text>
</comment>
<comment type="cofactor">
    <cofactor evidence="1">
        <name>Zn(2+)</name>
        <dbReference type="ChEBI" id="CHEBI:29105"/>
    </cofactor>
    <text evidence="1">Binds 1 zinc ion per subunit.</text>
</comment>
<comment type="similarity">
    <text evidence="3">Belongs to the eukaryotic ribosomal protein eL37 family.</text>
</comment>
<name>RL37_PYRHO</name>
<sequence length="62" mass="7298">MSSGTPSLGKRNKTPTHIRCRRCGRKAFNVKKGYCAACGFGRSRRLRKYRWSKKWKKKKNVH</sequence>
<protein>
    <recommendedName>
        <fullName evidence="3">Large ribosomal subunit protein eL37</fullName>
    </recommendedName>
    <alternativeName>
        <fullName>50S ribosomal protein L37e</fullName>
    </alternativeName>
</protein>
<organism>
    <name type="scientific">Pyrococcus horikoshii (strain ATCC 700860 / DSM 12428 / JCM 9974 / NBRC 100139 / OT-3)</name>
    <dbReference type="NCBI Taxonomy" id="70601"/>
    <lineage>
        <taxon>Archaea</taxon>
        <taxon>Methanobacteriati</taxon>
        <taxon>Methanobacteriota</taxon>
        <taxon>Thermococci</taxon>
        <taxon>Thermococcales</taxon>
        <taxon>Thermococcaceae</taxon>
        <taxon>Pyrococcus</taxon>
    </lineage>
</organism>
<dbReference type="EMBL" id="BA000001">
    <property type="protein sequence ID" value="BAA30627.1"/>
    <property type="molecule type" value="Genomic_DNA"/>
</dbReference>
<dbReference type="PIR" id="C71028">
    <property type="entry name" value="C71028"/>
</dbReference>
<dbReference type="RefSeq" id="WP_010867766.1">
    <property type="nucleotide sequence ID" value="NC_000961.1"/>
</dbReference>
<dbReference type="SMR" id="P62005"/>
<dbReference type="STRING" id="70601.gene:9378501"/>
<dbReference type="EnsemblBacteria" id="BAA30627">
    <property type="protein sequence ID" value="BAA30627"/>
    <property type="gene ID" value="BAA30627"/>
</dbReference>
<dbReference type="GeneID" id="1443834"/>
<dbReference type="KEGG" id="pho:PHS041"/>
<dbReference type="eggNOG" id="arCOG04126">
    <property type="taxonomic scope" value="Archaea"/>
</dbReference>
<dbReference type="OrthoDB" id="5619at2157"/>
<dbReference type="Proteomes" id="UP000000752">
    <property type="component" value="Chromosome"/>
</dbReference>
<dbReference type="GO" id="GO:0022625">
    <property type="term" value="C:cytosolic large ribosomal subunit"/>
    <property type="evidence" value="ECO:0007669"/>
    <property type="project" value="TreeGrafter"/>
</dbReference>
<dbReference type="GO" id="GO:0019843">
    <property type="term" value="F:rRNA binding"/>
    <property type="evidence" value="ECO:0007669"/>
    <property type="project" value="UniProtKB-KW"/>
</dbReference>
<dbReference type="GO" id="GO:0003735">
    <property type="term" value="F:structural constituent of ribosome"/>
    <property type="evidence" value="ECO:0007669"/>
    <property type="project" value="InterPro"/>
</dbReference>
<dbReference type="GO" id="GO:0008270">
    <property type="term" value="F:zinc ion binding"/>
    <property type="evidence" value="ECO:0007669"/>
    <property type="project" value="UniProtKB-UniRule"/>
</dbReference>
<dbReference type="GO" id="GO:0006412">
    <property type="term" value="P:translation"/>
    <property type="evidence" value="ECO:0007669"/>
    <property type="project" value="UniProtKB-UniRule"/>
</dbReference>
<dbReference type="FunFam" id="2.20.25.30:FF:000003">
    <property type="entry name" value="50S ribosomal protein L37e"/>
    <property type="match status" value="1"/>
</dbReference>
<dbReference type="Gene3D" id="2.20.25.30">
    <property type="match status" value="1"/>
</dbReference>
<dbReference type="HAMAP" id="MF_00547">
    <property type="entry name" value="Ribosomal_eL37"/>
    <property type="match status" value="1"/>
</dbReference>
<dbReference type="InterPro" id="IPR001569">
    <property type="entry name" value="Ribosomal_eL37"/>
</dbReference>
<dbReference type="InterPro" id="IPR011331">
    <property type="entry name" value="Ribosomal_eL37/eL43"/>
</dbReference>
<dbReference type="InterPro" id="IPR018267">
    <property type="entry name" value="Ribosomal_eL37_CS"/>
</dbReference>
<dbReference type="InterPro" id="IPR011332">
    <property type="entry name" value="Ribosomal_zn-bd"/>
</dbReference>
<dbReference type="NCBIfam" id="NF003214">
    <property type="entry name" value="PRK04179.1"/>
    <property type="match status" value="1"/>
</dbReference>
<dbReference type="PANTHER" id="PTHR10768">
    <property type="entry name" value="60S RIBOSOMAL PROTEIN L37"/>
    <property type="match status" value="1"/>
</dbReference>
<dbReference type="PANTHER" id="PTHR10768:SF0">
    <property type="entry name" value="RIBOSOMAL PROTEIN L37"/>
    <property type="match status" value="1"/>
</dbReference>
<dbReference type="Pfam" id="PF01907">
    <property type="entry name" value="Ribosomal_L37e"/>
    <property type="match status" value="1"/>
</dbReference>
<dbReference type="SUPFAM" id="SSF57829">
    <property type="entry name" value="Zn-binding ribosomal proteins"/>
    <property type="match status" value="1"/>
</dbReference>
<dbReference type="PROSITE" id="PS01077">
    <property type="entry name" value="RIBOSOMAL_L37E"/>
    <property type="match status" value="1"/>
</dbReference>
<feature type="chain" id="PRO_0000139736" description="Large ribosomal subunit protein eL37">
    <location>
        <begin position="1"/>
        <end position="62"/>
    </location>
</feature>
<feature type="zinc finger region" description="C4-type" evidence="2">
    <location>
        <begin position="20"/>
        <end position="38"/>
    </location>
</feature>
<feature type="binding site" evidence="1">
    <location>
        <position position="20"/>
    </location>
    <ligand>
        <name>Zn(2+)</name>
        <dbReference type="ChEBI" id="CHEBI:29105"/>
    </ligand>
</feature>
<feature type="binding site" evidence="1">
    <location>
        <position position="23"/>
    </location>
    <ligand>
        <name>Zn(2+)</name>
        <dbReference type="ChEBI" id="CHEBI:29105"/>
    </ligand>
</feature>
<feature type="binding site" evidence="1">
    <location>
        <position position="35"/>
    </location>
    <ligand>
        <name>Zn(2+)</name>
        <dbReference type="ChEBI" id="CHEBI:29105"/>
    </ligand>
</feature>
<feature type="binding site" evidence="1">
    <location>
        <position position="38"/>
    </location>
    <ligand>
        <name>Zn(2+)</name>
        <dbReference type="ChEBI" id="CHEBI:29105"/>
    </ligand>
</feature>
<gene>
    <name type="primary">rpl37e</name>
    <name type="ordered locus">PH1518.1</name>
    <name type="ORF">PHS041</name>
</gene>